<reference key="1">
    <citation type="journal article" date="2009" name="Infect. Immun.">
        <title>Comparative genomics reveal extensive transposon-mediated genomic plasticity and diversity among potential effector proteins within the genus Coxiella.</title>
        <authorList>
            <person name="Beare P.A."/>
            <person name="Unsworth N."/>
            <person name="Andoh M."/>
            <person name="Voth D.E."/>
            <person name="Omsland A."/>
            <person name="Gilk S.D."/>
            <person name="Williams K.P."/>
            <person name="Sobral B.W."/>
            <person name="Kupko J.J. III"/>
            <person name="Porcella S.F."/>
            <person name="Samuel J.E."/>
            <person name="Heinzen R.A."/>
        </authorList>
    </citation>
    <scope>NUCLEOTIDE SEQUENCE [LARGE SCALE GENOMIC DNA]</scope>
    <source>
        <strain>CbuK_Q154</strain>
    </source>
</reference>
<name>SUCC_COXB1</name>
<proteinExistence type="inferred from homology"/>
<evidence type="ECO:0000255" key="1">
    <source>
        <dbReference type="HAMAP-Rule" id="MF_00558"/>
    </source>
</evidence>
<comment type="function">
    <text evidence="1">Succinyl-CoA synthetase functions in the citric acid cycle (TCA), coupling the hydrolysis of succinyl-CoA to the synthesis of either ATP or GTP and thus represents the only step of substrate-level phosphorylation in the TCA. The beta subunit provides nucleotide specificity of the enzyme and binds the substrate succinate, while the binding sites for coenzyme A and phosphate are found in the alpha subunit.</text>
</comment>
<comment type="catalytic activity">
    <reaction evidence="1">
        <text>succinate + ATP + CoA = succinyl-CoA + ADP + phosphate</text>
        <dbReference type="Rhea" id="RHEA:17661"/>
        <dbReference type="ChEBI" id="CHEBI:30031"/>
        <dbReference type="ChEBI" id="CHEBI:30616"/>
        <dbReference type="ChEBI" id="CHEBI:43474"/>
        <dbReference type="ChEBI" id="CHEBI:57287"/>
        <dbReference type="ChEBI" id="CHEBI:57292"/>
        <dbReference type="ChEBI" id="CHEBI:456216"/>
        <dbReference type="EC" id="6.2.1.5"/>
    </reaction>
    <physiologicalReaction direction="right-to-left" evidence="1">
        <dbReference type="Rhea" id="RHEA:17663"/>
    </physiologicalReaction>
</comment>
<comment type="catalytic activity">
    <reaction evidence="1">
        <text>GTP + succinate + CoA = succinyl-CoA + GDP + phosphate</text>
        <dbReference type="Rhea" id="RHEA:22120"/>
        <dbReference type="ChEBI" id="CHEBI:30031"/>
        <dbReference type="ChEBI" id="CHEBI:37565"/>
        <dbReference type="ChEBI" id="CHEBI:43474"/>
        <dbReference type="ChEBI" id="CHEBI:57287"/>
        <dbReference type="ChEBI" id="CHEBI:57292"/>
        <dbReference type="ChEBI" id="CHEBI:58189"/>
    </reaction>
    <physiologicalReaction direction="right-to-left" evidence="1">
        <dbReference type="Rhea" id="RHEA:22122"/>
    </physiologicalReaction>
</comment>
<comment type="cofactor">
    <cofactor evidence="1">
        <name>Mg(2+)</name>
        <dbReference type="ChEBI" id="CHEBI:18420"/>
    </cofactor>
    <text evidence="1">Binds 1 Mg(2+) ion per subunit.</text>
</comment>
<comment type="pathway">
    <text evidence="1">Carbohydrate metabolism; tricarboxylic acid cycle; succinate from succinyl-CoA (ligase route): step 1/1.</text>
</comment>
<comment type="subunit">
    <text evidence="1">Heterotetramer of two alpha and two beta subunits.</text>
</comment>
<comment type="similarity">
    <text evidence="1">Belongs to the succinate/malate CoA ligase beta subunit family.</text>
</comment>
<protein>
    <recommendedName>
        <fullName evidence="1">Succinate--CoA ligase [ADP-forming] subunit beta</fullName>
        <ecNumber evidence="1">6.2.1.5</ecNumber>
    </recommendedName>
    <alternativeName>
        <fullName evidence="1">Succinyl-CoA synthetase subunit beta</fullName>
        <shortName evidence="1">SCS-beta</shortName>
    </alternativeName>
</protein>
<gene>
    <name evidence="1" type="primary">sucC</name>
    <name type="ordered locus">CbuK_1469</name>
</gene>
<keyword id="KW-0067">ATP-binding</keyword>
<keyword id="KW-0436">Ligase</keyword>
<keyword id="KW-0460">Magnesium</keyword>
<keyword id="KW-0479">Metal-binding</keyword>
<keyword id="KW-0547">Nucleotide-binding</keyword>
<keyword id="KW-0816">Tricarboxylic acid cycle</keyword>
<feature type="chain" id="PRO_1000129176" description="Succinate--CoA ligase [ADP-forming] subunit beta">
    <location>
        <begin position="1"/>
        <end position="390"/>
    </location>
</feature>
<feature type="domain" description="ATP-grasp" evidence="1">
    <location>
        <begin position="9"/>
        <end position="245"/>
    </location>
</feature>
<feature type="binding site" evidence="1">
    <location>
        <position position="46"/>
    </location>
    <ligand>
        <name>ATP</name>
        <dbReference type="ChEBI" id="CHEBI:30616"/>
    </ligand>
</feature>
<feature type="binding site" evidence="1">
    <location>
        <begin position="53"/>
        <end position="55"/>
    </location>
    <ligand>
        <name>ATP</name>
        <dbReference type="ChEBI" id="CHEBI:30616"/>
    </ligand>
</feature>
<feature type="binding site" evidence="1">
    <location>
        <position position="99"/>
    </location>
    <ligand>
        <name>ATP</name>
        <dbReference type="ChEBI" id="CHEBI:30616"/>
    </ligand>
</feature>
<feature type="binding site" evidence="1">
    <location>
        <position position="102"/>
    </location>
    <ligand>
        <name>ATP</name>
        <dbReference type="ChEBI" id="CHEBI:30616"/>
    </ligand>
</feature>
<feature type="binding site" evidence="1">
    <location>
        <position position="107"/>
    </location>
    <ligand>
        <name>ATP</name>
        <dbReference type="ChEBI" id="CHEBI:30616"/>
    </ligand>
</feature>
<feature type="binding site" evidence="1">
    <location>
        <position position="200"/>
    </location>
    <ligand>
        <name>Mg(2+)</name>
        <dbReference type="ChEBI" id="CHEBI:18420"/>
    </ligand>
</feature>
<feature type="binding site" evidence="1">
    <location>
        <position position="214"/>
    </location>
    <ligand>
        <name>Mg(2+)</name>
        <dbReference type="ChEBI" id="CHEBI:18420"/>
    </ligand>
</feature>
<feature type="binding site" evidence="1">
    <location>
        <position position="265"/>
    </location>
    <ligand>
        <name>substrate</name>
        <note>ligand shared with subunit alpha</note>
    </ligand>
</feature>
<feature type="binding site" evidence="1">
    <location>
        <begin position="322"/>
        <end position="324"/>
    </location>
    <ligand>
        <name>substrate</name>
        <note>ligand shared with subunit alpha</note>
    </ligand>
</feature>
<organism>
    <name type="scientific">Coxiella burnetii (strain CbuK_Q154)</name>
    <name type="common">Coxiella burnetii (strain Q154)</name>
    <dbReference type="NCBI Taxonomy" id="434924"/>
    <lineage>
        <taxon>Bacteria</taxon>
        <taxon>Pseudomonadati</taxon>
        <taxon>Pseudomonadota</taxon>
        <taxon>Gammaproteobacteria</taxon>
        <taxon>Legionellales</taxon>
        <taxon>Coxiellaceae</taxon>
        <taxon>Coxiella</taxon>
    </lineage>
</organism>
<sequence>MNLHEYQSKHLLKKYNIPVPASEVVFNPDAAVDAAAKIGGDRWVVKAQVHAGGRGKAGGVRLVKNKEELKSAVKALLGTRLVTYQTDERGQPVNQILVEQTSDIARELYLGAVIDRASQRIVFMASTEGGVEIEKVAEKSPEKILKVTVDPAIGLQPFQCRQLFFGLGLQDLKQMRSFTDIVMGLYRLFTERDLSLLEINPLVITGSGELICLDAKINIDDSALYRQSELREMRDTTQEDEHETMAQQWELNYIKLDGNIGCMVNGAGLAMATMDLIKLSGGDPANFLDVGGSATKERVTEAFKIIASDKNVKGILVNIFGGIVRCDLIADGIISAVKEVGIDVPVVVRLEGNNAQLGAKKLADSGMNIIAAKGFADAAEQIVKQVGVIA</sequence>
<accession>B6J8N7</accession>
<dbReference type="EC" id="6.2.1.5" evidence="1"/>
<dbReference type="EMBL" id="CP001020">
    <property type="protein sequence ID" value="ACJ20636.1"/>
    <property type="molecule type" value="Genomic_DNA"/>
</dbReference>
<dbReference type="RefSeq" id="WP_005771709.1">
    <property type="nucleotide sequence ID" value="NC_011528.1"/>
</dbReference>
<dbReference type="SMR" id="B6J8N7"/>
<dbReference type="KEGG" id="cbc:CbuK_1469"/>
<dbReference type="HOGENOM" id="CLU_037430_0_2_6"/>
<dbReference type="UniPathway" id="UPA00223">
    <property type="reaction ID" value="UER00999"/>
</dbReference>
<dbReference type="GO" id="GO:0005829">
    <property type="term" value="C:cytosol"/>
    <property type="evidence" value="ECO:0007669"/>
    <property type="project" value="TreeGrafter"/>
</dbReference>
<dbReference type="GO" id="GO:0042709">
    <property type="term" value="C:succinate-CoA ligase complex"/>
    <property type="evidence" value="ECO:0007669"/>
    <property type="project" value="TreeGrafter"/>
</dbReference>
<dbReference type="GO" id="GO:0005524">
    <property type="term" value="F:ATP binding"/>
    <property type="evidence" value="ECO:0007669"/>
    <property type="project" value="UniProtKB-UniRule"/>
</dbReference>
<dbReference type="GO" id="GO:0000287">
    <property type="term" value="F:magnesium ion binding"/>
    <property type="evidence" value="ECO:0007669"/>
    <property type="project" value="UniProtKB-UniRule"/>
</dbReference>
<dbReference type="GO" id="GO:0004775">
    <property type="term" value="F:succinate-CoA ligase (ADP-forming) activity"/>
    <property type="evidence" value="ECO:0007669"/>
    <property type="project" value="UniProtKB-UniRule"/>
</dbReference>
<dbReference type="GO" id="GO:0004776">
    <property type="term" value="F:succinate-CoA ligase (GDP-forming) activity"/>
    <property type="evidence" value="ECO:0007669"/>
    <property type="project" value="RHEA"/>
</dbReference>
<dbReference type="GO" id="GO:0006104">
    <property type="term" value="P:succinyl-CoA metabolic process"/>
    <property type="evidence" value="ECO:0007669"/>
    <property type="project" value="TreeGrafter"/>
</dbReference>
<dbReference type="GO" id="GO:0006099">
    <property type="term" value="P:tricarboxylic acid cycle"/>
    <property type="evidence" value="ECO:0007669"/>
    <property type="project" value="UniProtKB-UniRule"/>
</dbReference>
<dbReference type="FunFam" id="3.30.1490.20:FF:000002">
    <property type="entry name" value="Succinate--CoA ligase [ADP-forming] subunit beta"/>
    <property type="match status" value="1"/>
</dbReference>
<dbReference type="FunFam" id="3.30.470.20:FF:000002">
    <property type="entry name" value="Succinate--CoA ligase [ADP-forming] subunit beta"/>
    <property type="match status" value="1"/>
</dbReference>
<dbReference type="FunFam" id="3.40.50.261:FF:000001">
    <property type="entry name" value="Succinate--CoA ligase [ADP-forming] subunit beta"/>
    <property type="match status" value="1"/>
</dbReference>
<dbReference type="Gene3D" id="3.30.1490.20">
    <property type="entry name" value="ATP-grasp fold, A domain"/>
    <property type="match status" value="1"/>
</dbReference>
<dbReference type="Gene3D" id="3.30.470.20">
    <property type="entry name" value="ATP-grasp fold, B domain"/>
    <property type="match status" value="1"/>
</dbReference>
<dbReference type="Gene3D" id="3.40.50.261">
    <property type="entry name" value="Succinyl-CoA synthetase domains"/>
    <property type="match status" value="1"/>
</dbReference>
<dbReference type="HAMAP" id="MF_00558">
    <property type="entry name" value="Succ_CoA_beta"/>
    <property type="match status" value="1"/>
</dbReference>
<dbReference type="InterPro" id="IPR011761">
    <property type="entry name" value="ATP-grasp"/>
</dbReference>
<dbReference type="InterPro" id="IPR013650">
    <property type="entry name" value="ATP-grasp_succ-CoA_synth-type"/>
</dbReference>
<dbReference type="InterPro" id="IPR013815">
    <property type="entry name" value="ATP_grasp_subdomain_1"/>
</dbReference>
<dbReference type="InterPro" id="IPR017866">
    <property type="entry name" value="Succ-CoA_synthase_bsu_CS"/>
</dbReference>
<dbReference type="InterPro" id="IPR005811">
    <property type="entry name" value="SUCC_ACL_C"/>
</dbReference>
<dbReference type="InterPro" id="IPR005809">
    <property type="entry name" value="Succ_CoA_ligase-like_bsu"/>
</dbReference>
<dbReference type="InterPro" id="IPR016102">
    <property type="entry name" value="Succinyl-CoA_synth-like"/>
</dbReference>
<dbReference type="NCBIfam" id="NF001913">
    <property type="entry name" value="PRK00696.1"/>
    <property type="match status" value="1"/>
</dbReference>
<dbReference type="NCBIfam" id="TIGR01016">
    <property type="entry name" value="sucCoAbeta"/>
    <property type="match status" value="1"/>
</dbReference>
<dbReference type="PANTHER" id="PTHR11815:SF10">
    <property type="entry name" value="SUCCINATE--COA LIGASE [GDP-FORMING] SUBUNIT BETA, MITOCHONDRIAL"/>
    <property type="match status" value="1"/>
</dbReference>
<dbReference type="PANTHER" id="PTHR11815">
    <property type="entry name" value="SUCCINYL-COA SYNTHETASE BETA CHAIN"/>
    <property type="match status" value="1"/>
</dbReference>
<dbReference type="Pfam" id="PF08442">
    <property type="entry name" value="ATP-grasp_2"/>
    <property type="match status" value="1"/>
</dbReference>
<dbReference type="Pfam" id="PF00549">
    <property type="entry name" value="Ligase_CoA"/>
    <property type="match status" value="1"/>
</dbReference>
<dbReference type="PIRSF" id="PIRSF001554">
    <property type="entry name" value="SucCS_beta"/>
    <property type="match status" value="1"/>
</dbReference>
<dbReference type="SUPFAM" id="SSF56059">
    <property type="entry name" value="Glutathione synthetase ATP-binding domain-like"/>
    <property type="match status" value="1"/>
</dbReference>
<dbReference type="SUPFAM" id="SSF52210">
    <property type="entry name" value="Succinyl-CoA synthetase domains"/>
    <property type="match status" value="1"/>
</dbReference>
<dbReference type="PROSITE" id="PS50975">
    <property type="entry name" value="ATP_GRASP"/>
    <property type="match status" value="1"/>
</dbReference>
<dbReference type="PROSITE" id="PS01217">
    <property type="entry name" value="SUCCINYL_COA_LIG_3"/>
    <property type="match status" value="1"/>
</dbReference>